<dbReference type="EMBL" id="BC045067">
    <property type="protein sequence ID" value="AAH45067.1"/>
    <property type="molecule type" value="mRNA"/>
</dbReference>
<dbReference type="RefSeq" id="NP_001080776.1">
    <property type="nucleotide sequence ID" value="NM_001087307.1"/>
</dbReference>
<dbReference type="SMR" id="Q7ZXB5"/>
<dbReference type="BioGRID" id="98711">
    <property type="interactions" value="1"/>
</dbReference>
<dbReference type="IntAct" id="Q7ZXB5">
    <property type="interactions" value="1"/>
</dbReference>
<dbReference type="DNASU" id="380469"/>
<dbReference type="GeneID" id="380469"/>
<dbReference type="KEGG" id="xla:380469"/>
<dbReference type="AGR" id="Xenbase:XB-GENE-971204"/>
<dbReference type="CTD" id="380469"/>
<dbReference type="Xenbase" id="XB-GENE-971204">
    <property type="gene designation" value="rbm22.S"/>
</dbReference>
<dbReference type="OMA" id="CPLRVQW"/>
<dbReference type="OrthoDB" id="10259600at2759"/>
<dbReference type="Proteomes" id="UP000186698">
    <property type="component" value="Chromosome 6S"/>
</dbReference>
<dbReference type="Bgee" id="380469">
    <property type="expression patterns" value="Expressed in blastula and 19 other cell types or tissues"/>
</dbReference>
<dbReference type="GO" id="GO:0005737">
    <property type="term" value="C:cytoplasm"/>
    <property type="evidence" value="ECO:0000250"/>
    <property type="project" value="UniProtKB"/>
</dbReference>
<dbReference type="GO" id="GO:0005634">
    <property type="term" value="C:nucleus"/>
    <property type="evidence" value="ECO:0000250"/>
    <property type="project" value="UniProtKB"/>
</dbReference>
<dbReference type="GO" id="GO:0000974">
    <property type="term" value="C:Prp19 complex"/>
    <property type="evidence" value="ECO:0000318"/>
    <property type="project" value="GO_Central"/>
</dbReference>
<dbReference type="GO" id="GO:0071006">
    <property type="term" value="C:U2-type catalytic step 1 spliceosome"/>
    <property type="evidence" value="ECO:0000318"/>
    <property type="project" value="GO_Central"/>
</dbReference>
<dbReference type="GO" id="GO:0071007">
    <property type="term" value="C:U2-type catalytic step 2 spliceosome"/>
    <property type="evidence" value="ECO:0000318"/>
    <property type="project" value="GO_Central"/>
</dbReference>
<dbReference type="GO" id="GO:0036002">
    <property type="term" value="F:pre-mRNA binding"/>
    <property type="evidence" value="ECO:0000250"/>
    <property type="project" value="UniProtKB"/>
</dbReference>
<dbReference type="GO" id="GO:0017070">
    <property type="term" value="F:U6 snRNA binding"/>
    <property type="evidence" value="ECO:0000250"/>
    <property type="project" value="UniProtKB"/>
</dbReference>
<dbReference type="GO" id="GO:0008270">
    <property type="term" value="F:zinc ion binding"/>
    <property type="evidence" value="ECO:0007669"/>
    <property type="project" value="UniProtKB-KW"/>
</dbReference>
<dbReference type="GO" id="GO:0045292">
    <property type="term" value="P:mRNA cis splicing, via spliceosome"/>
    <property type="evidence" value="ECO:0000250"/>
    <property type="project" value="UniProtKB"/>
</dbReference>
<dbReference type="GO" id="GO:0033120">
    <property type="term" value="P:positive regulation of RNA splicing"/>
    <property type="evidence" value="ECO:0000250"/>
    <property type="project" value="UniProtKB"/>
</dbReference>
<dbReference type="CDD" id="cd12224">
    <property type="entry name" value="RRM_RBM22"/>
    <property type="match status" value="1"/>
</dbReference>
<dbReference type="FunFam" id="3.30.70.330:FF:000137">
    <property type="entry name" value="pre-mRNA-splicing factor RBM22"/>
    <property type="match status" value="1"/>
</dbReference>
<dbReference type="FunFam" id="4.10.1000.10:FF:000006">
    <property type="entry name" value="Putative pre-mrna-splicing factor rbm22"/>
    <property type="match status" value="1"/>
</dbReference>
<dbReference type="Gene3D" id="3.30.70.330">
    <property type="match status" value="1"/>
</dbReference>
<dbReference type="Gene3D" id="4.10.1000.10">
    <property type="entry name" value="Zinc finger, CCCH-type"/>
    <property type="match status" value="1"/>
</dbReference>
<dbReference type="InterPro" id="IPR039171">
    <property type="entry name" value="Cwc2/Slt11"/>
</dbReference>
<dbReference type="InterPro" id="IPR012677">
    <property type="entry name" value="Nucleotide-bd_a/b_plait_sf"/>
</dbReference>
<dbReference type="InterPro" id="IPR035979">
    <property type="entry name" value="RBD_domain_sf"/>
</dbReference>
<dbReference type="InterPro" id="IPR000504">
    <property type="entry name" value="RRM_dom"/>
</dbReference>
<dbReference type="InterPro" id="IPR048995">
    <property type="entry name" value="STL11/RBM22-like_N"/>
</dbReference>
<dbReference type="InterPro" id="IPR000571">
    <property type="entry name" value="Znf_CCCH"/>
</dbReference>
<dbReference type="InterPro" id="IPR036855">
    <property type="entry name" value="Znf_CCCH_sf"/>
</dbReference>
<dbReference type="PANTHER" id="PTHR14089">
    <property type="entry name" value="PRE-MRNA-SPLICING FACTOR RBM22"/>
    <property type="match status" value="1"/>
</dbReference>
<dbReference type="PANTHER" id="PTHR14089:SF6">
    <property type="entry name" value="PRE-MRNA-SPLICING FACTOR RBM22"/>
    <property type="match status" value="1"/>
</dbReference>
<dbReference type="Pfam" id="PF00076">
    <property type="entry name" value="RRM_1"/>
    <property type="match status" value="1"/>
</dbReference>
<dbReference type="Pfam" id="PF21369">
    <property type="entry name" value="STL11_N"/>
    <property type="match status" value="1"/>
</dbReference>
<dbReference type="SMART" id="SM00360">
    <property type="entry name" value="RRM"/>
    <property type="match status" value="1"/>
</dbReference>
<dbReference type="SMART" id="SM00356">
    <property type="entry name" value="ZnF_C3H1"/>
    <property type="match status" value="1"/>
</dbReference>
<dbReference type="SUPFAM" id="SSF90229">
    <property type="entry name" value="CCCH zinc finger"/>
    <property type="match status" value="1"/>
</dbReference>
<dbReference type="SUPFAM" id="SSF54928">
    <property type="entry name" value="RNA-binding domain, RBD"/>
    <property type="match status" value="1"/>
</dbReference>
<dbReference type="PROSITE" id="PS50102">
    <property type="entry name" value="RRM"/>
    <property type="match status" value="1"/>
</dbReference>
<dbReference type="PROSITE" id="PS50103">
    <property type="entry name" value="ZF_C3H1"/>
    <property type="match status" value="1"/>
</dbReference>
<keyword id="KW-0963">Cytoplasm</keyword>
<keyword id="KW-0217">Developmental protein</keyword>
<keyword id="KW-0479">Metal-binding</keyword>
<keyword id="KW-0507">mRNA processing</keyword>
<keyword id="KW-0508">mRNA splicing</keyword>
<keyword id="KW-0539">Nucleus</keyword>
<keyword id="KW-1185">Reference proteome</keyword>
<keyword id="KW-0694">RNA-binding</keyword>
<keyword id="KW-0747">Spliceosome</keyword>
<keyword id="KW-0862">Zinc</keyword>
<keyword id="KW-0863">Zinc-finger</keyword>
<reference key="1">
    <citation type="submission" date="2003-01" db="EMBL/GenBank/DDBJ databases">
        <authorList>
            <consortium name="NIH - Xenopus Gene Collection (XGC) project"/>
        </authorList>
    </citation>
    <scope>NUCLEOTIDE SEQUENCE [LARGE SCALE MRNA]</scope>
    <source>
        <tissue>Embryo</tissue>
    </source>
</reference>
<proteinExistence type="evidence at transcript level"/>
<comment type="function">
    <text evidence="2">Required for pre-mRNA splicing as component of the activated spliceosome. Involved in the first step of pre-mRNA splicing. Binds directly to the internal stem-loop (ISL) domain of the U6 snRNA and to the pre-mRNA intron near the 5' splice site during the activation and catalytic phases of the spliceosome cycle.</text>
</comment>
<comment type="subunit">
    <text evidence="2">Component of the pre-catalytic and catalytic spliceosome complexes. Component of the postcatalytic spliceosome P complex.</text>
</comment>
<comment type="subcellular location">
    <subcellularLocation>
        <location evidence="2">Nucleus</location>
    </subcellularLocation>
    <subcellularLocation>
        <location evidence="2">Cytoplasm</location>
    </subcellularLocation>
    <text evidence="2">Nearly exclusively nuclear. May be shuttling between the nucleus and the cytosol.</text>
</comment>
<comment type="domain">
    <text evidence="1">The C-terminal RRM domain and the zinc finger motif are necessary for RNA-binding.</text>
</comment>
<comment type="similarity">
    <text evidence="6">Belongs to the SLT11 family.</text>
</comment>
<protein>
    <recommendedName>
        <fullName>Pre-mRNA-splicing factor RBM22</fullName>
    </recommendedName>
    <alternativeName>
        <fullName>RNA-binding motif protein 22</fullName>
    </alternativeName>
</protein>
<sequence>MATSLGSNTYNRQNWEDADFPILCQTCLGENPYIRMTKEKYGKECKICARPFTVFRWCPGVRMRFKKTEVCQTCSKLKNVCQTCLLDLEYGLPIQVRDTGVSLKDEMPRSDVNKEYYTQNMEREIANSDGTRPVGALGKATSSSDMLLKLARTTPYYKRNRPHICSFWVKGECKRGEECPYRHEKPTDPDDPLADQNIKDRFYGINDPVADKLLKRASTMPRLDPPEDKSITTLYVGGLGDTISESELRNHFYQFGEIRTITVVQRQQCAFIQFATRQSAETAAEKSFNKLIVNGRRLNVKWGRSQAARGKEREHDGSGDPGMKFEPVPGLPGALPPPPTEEESSANYFNLPPNGSAALVNISLPPPPGLSGPPPGFGPHMFPPMAPPPFLRAPGHIHYPSQDPQRMGAHAGKPSSG</sequence>
<feature type="chain" id="PRO_0000250553" description="Pre-mRNA-splicing factor RBM22">
    <location>
        <begin position="1"/>
        <end position="417"/>
    </location>
</feature>
<feature type="domain" description="RRM" evidence="3">
    <location>
        <begin position="232"/>
        <end position="305"/>
    </location>
</feature>
<feature type="zinc finger region" description="C3H1-type" evidence="4">
    <location>
        <begin position="159"/>
        <end position="186"/>
    </location>
</feature>
<feature type="region of interest" description="Disordered" evidence="5">
    <location>
        <begin position="303"/>
        <end position="348"/>
    </location>
</feature>
<feature type="region of interest" description="Disordered" evidence="5">
    <location>
        <begin position="369"/>
        <end position="417"/>
    </location>
</feature>
<feature type="compositionally biased region" description="Basic and acidic residues" evidence="5">
    <location>
        <begin position="309"/>
        <end position="318"/>
    </location>
</feature>
<feature type="compositionally biased region" description="Pro residues" evidence="5">
    <location>
        <begin position="369"/>
        <end position="391"/>
    </location>
</feature>
<organism>
    <name type="scientific">Xenopus laevis</name>
    <name type="common">African clawed frog</name>
    <dbReference type="NCBI Taxonomy" id="8355"/>
    <lineage>
        <taxon>Eukaryota</taxon>
        <taxon>Metazoa</taxon>
        <taxon>Chordata</taxon>
        <taxon>Craniata</taxon>
        <taxon>Vertebrata</taxon>
        <taxon>Euteleostomi</taxon>
        <taxon>Amphibia</taxon>
        <taxon>Batrachia</taxon>
        <taxon>Anura</taxon>
        <taxon>Pipoidea</taxon>
        <taxon>Pipidae</taxon>
        <taxon>Xenopodinae</taxon>
        <taxon>Xenopus</taxon>
        <taxon>Xenopus</taxon>
    </lineage>
</organism>
<gene>
    <name type="primary">rbm22</name>
</gene>
<accession>Q7ZXB5</accession>
<evidence type="ECO:0000250" key="1"/>
<evidence type="ECO:0000250" key="2">
    <source>
        <dbReference type="UniProtKB" id="Q9NW64"/>
    </source>
</evidence>
<evidence type="ECO:0000255" key="3">
    <source>
        <dbReference type="PROSITE-ProRule" id="PRU00176"/>
    </source>
</evidence>
<evidence type="ECO:0000255" key="4">
    <source>
        <dbReference type="PROSITE-ProRule" id="PRU00723"/>
    </source>
</evidence>
<evidence type="ECO:0000256" key="5">
    <source>
        <dbReference type="SAM" id="MobiDB-lite"/>
    </source>
</evidence>
<evidence type="ECO:0000305" key="6"/>
<name>RBM22_XENLA</name>